<proteinExistence type="evidence at protein level"/>
<dbReference type="EC" id="3.4.21.-"/>
<dbReference type="EMBL" id="X94121">
    <property type="protein sequence ID" value="CAA63841.1"/>
    <property type="molecule type" value="Genomic_DNA"/>
</dbReference>
<dbReference type="EMBL" id="ADOT01000122">
    <property type="protein sequence ID" value="EGX50454.1"/>
    <property type="molecule type" value="Genomic_DNA"/>
</dbReference>
<dbReference type="RefSeq" id="XP_011120860.1">
    <property type="nucleotide sequence ID" value="XM_011122558.1"/>
</dbReference>
<dbReference type="SMR" id="G1X8P8"/>
<dbReference type="STRING" id="756982.G1X8P8"/>
<dbReference type="MEROPS" id="S08.120"/>
<dbReference type="GeneID" id="22892173"/>
<dbReference type="eggNOG" id="KOG1153">
    <property type="taxonomic scope" value="Eukaryota"/>
</dbReference>
<dbReference type="HOGENOM" id="CLU_011263_1_4_1"/>
<dbReference type="InParanoid" id="G1X8P8"/>
<dbReference type="OMA" id="MGAYMIG"/>
<dbReference type="OrthoDB" id="170749at4890"/>
<dbReference type="Proteomes" id="UP000008784">
    <property type="component" value="Unassembled WGS sequence"/>
</dbReference>
<dbReference type="GO" id="GO:0005576">
    <property type="term" value="C:extracellular region"/>
    <property type="evidence" value="ECO:0007669"/>
    <property type="project" value="UniProtKB-SubCell"/>
</dbReference>
<dbReference type="GO" id="GO:0004252">
    <property type="term" value="F:serine-type endopeptidase activity"/>
    <property type="evidence" value="ECO:0007669"/>
    <property type="project" value="InterPro"/>
</dbReference>
<dbReference type="GO" id="GO:0030574">
    <property type="term" value="P:collagen catabolic process"/>
    <property type="evidence" value="ECO:0007669"/>
    <property type="project" value="UniProtKB-KW"/>
</dbReference>
<dbReference type="GO" id="GO:0006508">
    <property type="term" value="P:proteolysis"/>
    <property type="evidence" value="ECO:0007669"/>
    <property type="project" value="UniProtKB-KW"/>
</dbReference>
<dbReference type="CDD" id="cd04077">
    <property type="entry name" value="Peptidases_S8_PCSK9_ProteinaseK_like"/>
    <property type="match status" value="1"/>
</dbReference>
<dbReference type="FunFam" id="3.40.50.200:FF:000014">
    <property type="entry name" value="Proteinase K"/>
    <property type="match status" value="1"/>
</dbReference>
<dbReference type="Gene3D" id="3.30.70.80">
    <property type="entry name" value="Peptidase S8 propeptide/proteinase inhibitor I9"/>
    <property type="match status" value="1"/>
</dbReference>
<dbReference type="Gene3D" id="3.40.50.200">
    <property type="entry name" value="Peptidase S8/S53 domain"/>
    <property type="match status" value="1"/>
</dbReference>
<dbReference type="InterPro" id="IPR034193">
    <property type="entry name" value="PCSK9_ProteinaseK-like"/>
</dbReference>
<dbReference type="InterPro" id="IPR000209">
    <property type="entry name" value="Peptidase_S8/S53_dom"/>
</dbReference>
<dbReference type="InterPro" id="IPR036852">
    <property type="entry name" value="Peptidase_S8/S53_dom_sf"/>
</dbReference>
<dbReference type="InterPro" id="IPR023827">
    <property type="entry name" value="Peptidase_S8_Asp-AS"/>
</dbReference>
<dbReference type="InterPro" id="IPR022398">
    <property type="entry name" value="Peptidase_S8_His-AS"/>
</dbReference>
<dbReference type="InterPro" id="IPR023828">
    <property type="entry name" value="Peptidase_S8_Ser-AS"/>
</dbReference>
<dbReference type="InterPro" id="IPR050131">
    <property type="entry name" value="Peptidase_S8_subtilisin-like"/>
</dbReference>
<dbReference type="InterPro" id="IPR015500">
    <property type="entry name" value="Peptidase_S8_subtilisin-rel"/>
</dbReference>
<dbReference type="InterPro" id="IPR010259">
    <property type="entry name" value="S8pro/Inhibitor_I9"/>
</dbReference>
<dbReference type="InterPro" id="IPR037045">
    <property type="entry name" value="S8pro/Inhibitor_I9_sf"/>
</dbReference>
<dbReference type="PANTHER" id="PTHR43806:SF58">
    <property type="entry name" value="ALKALINE PROTEASE 1-RELATED"/>
    <property type="match status" value="1"/>
</dbReference>
<dbReference type="PANTHER" id="PTHR43806">
    <property type="entry name" value="PEPTIDASE S8"/>
    <property type="match status" value="1"/>
</dbReference>
<dbReference type="Pfam" id="PF05922">
    <property type="entry name" value="Inhibitor_I9"/>
    <property type="match status" value="1"/>
</dbReference>
<dbReference type="Pfam" id="PF00082">
    <property type="entry name" value="Peptidase_S8"/>
    <property type="match status" value="1"/>
</dbReference>
<dbReference type="PRINTS" id="PR00723">
    <property type="entry name" value="SUBTILISIN"/>
</dbReference>
<dbReference type="SUPFAM" id="SSF52743">
    <property type="entry name" value="Subtilisin-like"/>
    <property type="match status" value="1"/>
</dbReference>
<dbReference type="PROSITE" id="PS51892">
    <property type="entry name" value="SUBTILASE"/>
    <property type="match status" value="1"/>
</dbReference>
<dbReference type="PROSITE" id="PS00136">
    <property type="entry name" value="SUBTILASE_ASP"/>
    <property type="match status" value="1"/>
</dbReference>
<dbReference type="PROSITE" id="PS00137">
    <property type="entry name" value="SUBTILASE_HIS"/>
    <property type="match status" value="1"/>
</dbReference>
<dbReference type="PROSITE" id="PS00138">
    <property type="entry name" value="SUBTILASE_SER"/>
    <property type="match status" value="1"/>
</dbReference>
<accession>G1X8P8</accession>
<accession>P83290</accession>
<accession>Q00226</accession>
<accession>Q6SZH4</accession>
<accession>Q8NJT9</accession>
<keyword id="KW-0177">Collagen degradation</keyword>
<keyword id="KW-0903">Direct protein sequencing</keyword>
<keyword id="KW-0325">Glycoprotein</keyword>
<keyword id="KW-0378">Hydrolase</keyword>
<keyword id="KW-0645">Protease</keyword>
<keyword id="KW-1185">Reference proteome</keyword>
<keyword id="KW-0964">Secreted</keyword>
<keyword id="KW-0720">Serine protease</keyword>
<keyword id="KW-0732">Signal</keyword>
<keyword id="KW-0865">Zymogen</keyword>
<comment type="function">
    <text>Hydrolyzes gelatin, casein, the chromogenic substrate azocoll and the cuticle of the nematode P.redivivus. Immobilizes P.redivivus.</text>
</comment>
<comment type="activity regulation">
    <text evidence="4">Inhibited by PMSF, SSI, the peptide Phe-Val and by Phe, but not by EDTA.</text>
</comment>
<comment type="subcellular location">
    <subcellularLocation>
        <location evidence="1">Secreted</location>
    </subcellularLocation>
</comment>
<comment type="induction">
    <text evidence="4">By easily metabolized forms of nitrogen, including ammonia, nitrate and amino acids, and by glucose.</text>
</comment>
<comment type="similarity">
    <text evidence="5">Belongs to the peptidase S8 family.</text>
</comment>
<name>SPAZ_ARTOA</name>
<evidence type="ECO:0000250" key="1"/>
<evidence type="ECO:0000255" key="2"/>
<evidence type="ECO:0000255" key="3">
    <source>
        <dbReference type="PROSITE-ProRule" id="PRU01240"/>
    </source>
</evidence>
<evidence type="ECO:0000269" key="4">
    <source>
    </source>
</evidence>
<evidence type="ECO:0000305" key="5"/>
<organism>
    <name type="scientific">Arthrobotrys oligospora (strain ATCC 24927 / CBS 115.81 / DSM 1491)</name>
    <name type="common">Nematode-trapping fungus</name>
    <name type="synonym">Didymozoophaga oligospora</name>
    <dbReference type="NCBI Taxonomy" id="756982"/>
    <lineage>
        <taxon>Eukaryota</taxon>
        <taxon>Fungi</taxon>
        <taxon>Dikarya</taxon>
        <taxon>Ascomycota</taxon>
        <taxon>Pezizomycotina</taxon>
        <taxon>Orbiliomycetes</taxon>
        <taxon>Orbiliales</taxon>
        <taxon>Orbiliaceae</taxon>
        <taxon>Orbilia</taxon>
        <taxon>Orbilia oligospora</taxon>
    </lineage>
</organism>
<protein>
    <recommendedName>
        <fullName>Cuticle-degrading serine protease</fullName>
        <ecNumber>3.4.21.-</ecNumber>
    </recommendedName>
    <alternativeName>
        <fullName>Neutral serine protease Aoz1</fullName>
        <shortName>Aoz</shortName>
    </alternativeName>
    <alternativeName>
        <fullName>PII</fullName>
    </alternativeName>
</protein>
<reference key="1">
    <citation type="journal article" date="1996" name="Microbiology">
        <title>Sequence analysis and regulation of a gene encoding a cuticle-degrading serine protease from the nematophagous fungus Arthrobotrys oligospora.</title>
        <authorList>
            <person name="Ahman J."/>
            <person name="Ek B."/>
            <person name="Rask L."/>
            <person name="Tunlid A."/>
        </authorList>
    </citation>
    <scope>NUCLEOTIDE SEQUENCE [GENOMIC DNA]</scope>
    <scope>PROTEIN SEQUENCE OF 124-133; 140-146; 193-209; 212-216 AND 392-403</scope>
    <scope>ACTIVITY REGULATION</scope>
    <scope>INDUCTION</scope>
    <source>
        <strain>ATCC 24927 / CBS 115.81 / DSM 1491</strain>
    </source>
</reference>
<reference key="2">
    <citation type="journal article" date="2011" name="PLoS Pathog.">
        <title>Genomic and proteomic analyses of the fungus Arthrobotrys oligospora provide insights into nematode-trap formation.</title>
        <authorList>
            <person name="Yang J."/>
            <person name="Wang L."/>
            <person name="Ji X."/>
            <person name="Feng Y."/>
            <person name="Li X."/>
            <person name="Zou C."/>
            <person name="Xu J."/>
            <person name="Ren Y."/>
            <person name="Mi Q."/>
            <person name="Wu J."/>
            <person name="Liu S."/>
            <person name="Liu Y."/>
            <person name="Huang X."/>
            <person name="Wang H."/>
            <person name="Niu X."/>
            <person name="Li J."/>
            <person name="Liang L."/>
            <person name="Luo Y."/>
            <person name="Ji K."/>
            <person name="Zhou W."/>
            <person name="Yu Z."/>
            <person name="Li G."/>
            <person name="Liu Y."/>
            <person name="Li L."/>
            <person name="Qiao M."/>
            <person name="Feng L."/>
            <person name="Zhang K.-Q."/>
        </authorList>
    </citation>
    <scope>NUCLEOTIDE SEQUENCE [LARGE SCALE GENOMIC DNA]</scope>
    <source>
        <strain>ATCC 24927 / CBS 115.81 / DSM 1491</strain>
    </source>
</reference>
<feature type="signal peptide" evidence="2">
    <location>
        <begin position="1"/>
        <end position="21"/>
    </location>
</feature>
<feature type="propeptide" id="PRO_0000390696" evidence="4">
    <location>
        <begin position="22"/>
        <end position="123"/>
    </location>
</feature>
<feature type="chain" id="PRO_0000076415" description="Cuticle-degrading serine protease">
    <location>
        <begin position="124"/>
        <end position="409"/>
    </location>
</feature>
<feature type="domain" description="Inhibitor I9" evidence="2">
    <location>
        <begin position="39"/>
        <end position="122"/>
    </location>
</feature>
<feature type="domain" description="Peptidase S8" evidence="3">
    <location>
        <begin position="130"/>
        <end position="409"/>
    </location>
</feature>
<feature type="active site" description="Charge relay system" evidence="3">
    <location>
        <position position="164"/>
    </location>
</feature>
<feature type="active site" description="Charge relay system" evidence="3">
    <location>
        <position position="200"/>
    </location>
</feature>
<feature type="active site" description="Charge relay system" evidence="3">
    <location>
        <position position="353"/>
    </location>
</feature>
<feature type="glycosylation site" description="N-linked (GlcNAc...) asparagine" evidence="2">
    <location>
        <position position="178"/>
    </location>
</feature>
<feature type="glycosylation site" description="N-linked (GlcNAc...) asparagine" evidence="2">
    <location>
        <position position="252"/>
    </location>
</feature>
<feature type="sequence conflict" description="In Ref. 1; CAA63841." evidence="5" ref="1">
    <original>SKHTN</original>
    <variation>QTYH</variation>
    <location>
        <begin position="54"/>
        <end position="58"/>
    </location>
</feature>
<sequence>MLTNGLISLLAIAGLATNAFAGPIRKVSNAGAAGAIADKYIVVLKKGLSDSAVSKHTNRISSFHSNVARDLTGARAHGVGRKFRFSSTGFNGYVGGFDKATLQEILNSPEVDYVEQDTVVTTYAEQTDSTWGLDRISHEDYSAPYTYEYDETAAGAGTTVYVIDTGIRISHDEFQTVNGSSRATWGFNSVDKTDSDGNGHGTHCAGTIAGKTYGVSKKAKVVAVKVLSAGGSGSTAGVVSGMNWVAENATPNFSVASMSLGGSKSAALNTAVDAIFNAGITIVVAAGNENQDAKNVSPASAPNAITVGAIDSSNKIASFSNWGTLIDVFAPGVGVLSSWATSDKETKTISGTSMACPHVAGLAAYYISASEGGADPATITDKITSSAVSGQVTGNIRGSPNKIAYNGYA</sequence>